<comment type="function">
    <text evidence="3">Nicotinic acetylcholine receptor antagonist (PubMed:35418867). Binds to muscle nicotinic acetylcholine receptor (nAChR) and inhibits acetylcholine from binding to the receptor, thereby impairing neuromuscular transmission (PubMed:35418867). Produces peripheral paralysis by blocking neuromuscular transmission at the postsynaptic site (PubMed:35418867). Induces concentration-dependent inhibition of indirect twitches and abolishes contractile responses of tissues to exogenous acetylcholine and carbachol, in the chick biventer cervicis nerve-muscle preparation at 100-300 nM (in vitro) (PubMed:35418867). Prior incubation of tissues with Indian polyvalent antivenom (1 ml/0.6 mg) prevents the neurotoxic effects at 100 nM (in vitro) (PubMed:35418867). Addition of Indian polyvalent antivenom (1 ml/0.6 mg) at the t90 time point does not reverse the neurotoxic effects (in vitro) (PubMed:35418867). Displays non-competitive antagonism of concentration-response curves to carbachol, with a pA2 of 8.01 (in vitro) (PubMed:35418867).</text>
</comment>
<comment type="subcellular location">
    <subcellularLocation>
        <location evidence="3">Secreted</location>
    </subcellularLocation>
</comment>
<comment type="tissue specificity">
    <text evidence="5">Expressed by the venom gland.</text>
</comment>
<comment type="mass spectrometry" mass="7020.0" method="MALDI" evidence="3"/>
<comment type="miscellaneous">
    <text evidence="3">Constitutes approximately 1% of the whole venom protein content.</text>
</comment>
<comment type="similarity">
    <text evidence="5">Belongs to the three-finger toxin family. Short-chain subfamily. Type I alpha-neurotoxin sub-subfamily.</text>
</comment>
<reference key="1">
    <citation type="journal article" date="2022" name="Front. Pharmacol.">
        <title>Isolation and Characterization of Two Postsynaptic Neurotoxins From Indian Cobra (Naja Naja) Venom.</title>
        <authorList>
            <person name="Huynh T.M."/>
            <person name="Silva A."/>
            <person name="Isbister G.K."/>
            <person name="Hodgson W.C."/>
        </authorList>
    </citation>
    <scope>PROTEIN SEQUENCE</scope>
    <scope>FUNCTION</scope>
    <scope>SUBCELLULAR LOCATION</scope>
    <scope>MASS SPECTROMETRY</scope>
</reference>
<evidence type="ECO:0000250" key="1">
    <source>
        <dbReference type="UniProtKB" id="P80958"/>
    </source>
</evidence>
<evidence type="ECO:0000256" key="2">
    <source>
        <dbReference type="SAM" id="MobiDB-lite"/>
    </source>
</evidence>
<evidence type="ECO:0000269" key="3">
    <source>
    </source>
</evidence>
<evidence type="ECO:0000303" key="4">
    <source>
    </source>
</evidence>
<evidence type="ECO:0000305" key="5"/>
<accession>C0HM08</accession>
<name>3S12_NAJNA</name>
<organism>
    <name type="scientific">Naja naja</name>
    <name type="common">Indian cobra</name>
    <dbReference type="NCBI Taxonomy" id="35670"/>
    <lineage>
        <taxon>Eukaryota</taxon>
        <taxon>Metazoa</taxon>
        <taxon>Chordata</taxon>
        <taxon>Craniata</taxon>
        <taxon>Vertebrata</taxon>
        <taxon>Euteleostomi</taxon>
        <taxon>Lepidosauria</taxon>
        <taxon>Squamata</taxon>
        <taxon>Bifurcata</taxon>
        <taxon>Unidentata</taxon>
        <taxon>Episquamata</taxon>
        <taxon>Toxicofera</taxon>
        <taxon>Serpentes</taxon>
        <taxon>Colubroidea</taxon>
        <taxon>Elapidae</taxon>
        <taxon>Elapinae</taxon>
        <taxon>Naja</taxon>
    </lineage>
</organism>
<proteinExistence type="evidence at protein level"/>
<keyword id="KW-0008">Acetylcholine receptor inhibiting toxin</keyword>
<keyword id="KW-0903">Direct protein sequencing</keyword>
<keyword id="KW-1015">Disulfide bond</keyword>
<keyword id="KW-0872">Ion channel impairing toxin</keyword>
<keyword id="KW-0528">Neurotoxin</keyword>
<keyword id="KW-0629">Postsynaptic neurotoxin</keyword>
<keyword id="KW-1185">Reference proteome</keyword>
<keyword id="KW-0964">Secreted</keyword>
<keyword id="KW-0800">Toxin</keyword>
<sequence length="62" mass="6911">LECHNQQSSQTPTTTDCSGGETNCYKKWWSDHRGTIIERGCGCPTVKKGIELNCCTTDRCNN</sequence>
<dbReference type="SMR" id="C0HM08"/>
<dbReference type="Proteomes" id="UP000694559">
    <property type="component" value="Unplaced"/>
</dbReference>
<dbReference type="GO" id="GO:0005576">
    <property type="term" value="C:extracellular region"/>
    <property type="evidence" value="ECO:0007669"/>
    <property type="project" value="UniProtKB-SubCell"/>
</dbReference>
<dbReference type="GO" id="GO:0030550">
    <property type="term" value="F:acetylcholine receptor inhibitor activity"/>
    <property type="evidence" value="ECO:0007669"/>
    <property type="project" value="UniProtKB-KW"/>
</dbReference>
<dbReference type="GO" id="GO:0099106">
    <property type="term" value="F:ion channel regulator activity"/>
    <property type="evidence" value="ECO:0007669"/>
    <property type="project" value="UniProtKB-KW"/>
</dbReference>
<dbReference type="GO" id="GO:0090729">
    <property type="term" value="F:toxin activity"/>
    <property type="evidence" value="ECO:0007669"/>
    <property type="project" value="UniProtKB-KW"/>
</dbReference>
<dbReference type="CDD" id="cd00206">
    <property type="entry name" value="TFP_snake_toxin"/>
    <property type="match status" value="1"/>
</dbReference>
<dbReference type="FunFam" id="2.10.60.10:FF:000024">
    <property type="entry name" value="Cytotoxin 1"/>
    <property type="match status" value="1"/>
</dbReference>
<dbReference type="Gene3D" id="2.10.60.10">
    <property type="entry name" value="CD59"/>
    <property type="match status" value="1"/>
</dbReference>
<dbReference type="InterPro" id="IPR003571">
    <property type="entry name" value="Snake_3FTx"/>
</dbReference>
<dbReference type="InterPro" id="IPR045860">
    <property type="entry name" value="Snake_toxin-like_sf"/>
</dbReference>
<dbReference type="InterPro" id="IPR018354">
    <property type="entry name" value="Snake_toxin_con_site"/>
</dbReference>
<dbReference type="InterPro" id="IPR054131">
    <property type="entry name" value="Toxin_cobra-type"/>
</dbReference>
<dbReference type="Pfam" id="PF21947">
    <property type="entry name" value="Toxin_cobra-type"/>
    <property type="match status" value="1"/>
</dbReference>
<dbReference type="SUPFAM" id="SSF57302">
    <property type="entry name" value="Snake toxin-like"/>
    <property type="match status" value="1"/>
</dbReference>
<dbReference type="PROSITE" id="PS00272">
    <property type="entry name" value="SNAKE_TOXIN"/>
    <property type="match status" value="1"/>
</dbReference>
<feature type="chain" id="PRO_0000456213" description="Alpha-elapitoxin-Nn2a">
    <location>
        <begin position="1"/>
        <end position="62"/>
    </location>
</feature>
<feature type="region of interest" description="Disordered" evidence="2">
    <location>
        <begin position="1"/>
        <end position="20"/>
    </location>
</feature>
<feature type="disulfide bond" evidence="1">
    <location>
        <begin position="3"/>
        <end position="24"/>
    </location>
</feature>
<feature type="disulfide bond" evidence="1">
    <location>
        <begin position="17"/>
        <end position="41"/>
    </location>
</feature>
<feature type="disulfide bond" evidence="1">
    <location>
        <begin position="43"/>
        <end position="54"/>
    </location>
</feature>
<feature type="disulfide bond" evidence="1">
    <location>
        <begin position="55"/>
        <end position="60"/>
    </location>
</feature>
<protein>
    <recommendedName>
        <fullName evidence="4">Alpha-elapitoxin-Nn2a</fullName>
    </recommendedName>
    <alternativeName>
        <fullName evidence="5">Short neurotoxin 2</fullName>
    </alternativeName>
    <alternativeName>
        <fullName evidence="4">Short-chain alpha-neurotoxin Nn2a</fullName>
    </alternativeName>
</protein>